<accession>Q87WP0</accession>
<keyword id="KW-0067">ATP-binding</keyword>
<keyword id="KW-0143">Chaperone</keyword>
<keyword id="KW-0547">Nucleotide-binding</keyword>
<keyword id="KW-0597">Phosphoprotein</keyword>
<keyword id="KW-1185">Reference proteome</keyword>
<keyword id="KW-0346">Stress response</keyword>
<proteinExistence type="inferred from homology"/>
<dbReference type="EMBL" id="AE016853">
    <property type="protein sequence ID" value="AAO57953.1"/>
    <property type="molecule type" value="Genomic_DNA"/>
</dbReference>
<dbReference type="RefSeq" id="NP_794258.1">
    <property type="nucleotide sequence ID" value="NC_004578.1"/>
</dbReference>
<dbReference type="RefSeq" id="WP_011105024.1">
    <property type="nucleotide sequence ID" value="NC_004578.1"/>
</dbReference>
<dbReference type="SMR" id="Q87WP0"/>
<dbReference type="STRING" id="223283.PSPTO_4505"/>
<dbReference type="GeneID" id="1186188"/>
<dbReference type="KEGG" id="pst:PSPTO_4505"/>
<dbReference type="PATRIC" id="fig|223283.9.peg.4621"/>
<dbReference type="eggNOG" id="COG0443">
    <property type="taxonomic scope" value="Bacteria"/>
</dbReference>
<dbReference type="HOGENOM" id="CLU_005965_2_1_6"/>
<dbReference type="OrthoDB" id="9766019at2"/>
<dbReference type="PhylomeDB" id="Q87WP0"/>
<dbReference type="Proteomes" id="UP000002515">
    <property type="component" value="Chromosome"/>
</dbReference>
<dbReference type="GO" id="GO:0005524">
    <property type="term" value="F:ATP binding"/>
    <property type="evidence" value="ECO:0007669"/>
    <property type="project" value="UniProtKB-UniRule"/>
</dbReference>
<dbReference type="GO" id="GO:0140662">
    <property type="term" value="F:ATP-dependent protein folding chaperone"/>
    <property type="evidence" value="ECO:0007669"/>
    <property type="project" value="InterPro"/>
</dbReference>
<dbReference type="GO" id="GO:0051082">
    <property type="term" value="F:unfolded protein binding"/>
    <property type="evidence" value="ECO:0007669"/>
    <property type="project" value="InterPro"/>
</dbReference>
<dbReference type="CDD" id="cd10234">
    <property type="entry name" value="ASKHA_NBD_HSP70_DnaK-like"/>
    <property type="match status" value="1"/>
</dbReference>
<dbReference type="FunFam" id="2.60.34.10:FF:000014">
    <property type="entry name" value="Chaperone protein DnaK HSP70"/>
    <property type="match status" value="1"/>
</dbReference>
<dbReference type="FunFam" id="3.30.30.30:FF:000003">
    <property type="entry name" value="Heat shock protein 9"/>
    <property type="match status" value="1"/>
</dbReference>
<dbReference type="FunFam" id="1.20.1270.10:FF:000001">
    <property type="entry name" value="Molecular chaperone DnaK"/>
    <property type="match status" value="1"/>
</dbReference>
<dbReference type="FunFam" id="3.30.420.40:FF:000004">
    <property type="entry name" value="Molecular chaperone DnaK"/>
    <property type="match status" value="1"/>
</dbReference>
<dbReference type="FunFam" id="3.90.640.10:FF:000003">
    <property type="entry name" value="Molecular chaperone DnaK"/>
    <property type="match status" value="1"/>
</dbReference>
<dbReference type="Gene3D" id="1.20.1270.10">
    <property type="match status" value="1"/>
</dbReference>
<dbReference type="Gene3D" id="3.30.420.40">
    <property type="match status" value="2"/>
</dbReference>
<dbReference type="Gene3D" id="3.90.640.10">
    <property type="entry name" value="Actin, Chain A, domain 4"/>
    <property type="match status" value="1"/>
</dbReference>
<dbReference type="Gene3D" id="2.60.34.10">
    <property type="entry name" value="Substrate Binding Domain Of DNAk, Chain A, domain 1"/>
    <property type="match status" value="1"/>
</dbReference>
<dbReference type="HAMAP" id="MF_00332">
    <property type="entry name" value="DnaK"/>
    <property type="match status" value="1"/>
</dbReference>
<dbReference type="InterPro" id="IPR043129">
    <property type="entry name" value="ATPase_NBD"/>
</dbReference>
<dbReference type="InterPro" id="IPR012725">
    <property type="entry name" value="Chaperone_DnaK"/>
</dbReference>
<dbReference type="InterPro" id="IPR018181">
    <property type="entry name" value="Heat_shock_70_CS"/>
</dbReference>
<dbReference type="InterPro" id="IPR029048">
    <property type="entry name" value="HSP70_C_sf"/>
</dbReference>
<dbReference type="InterPro" id="IPR029047">
    <property type="entry name" value="HSP70_peptide-bd_sf"/>
</dbReference>
<dbReference type="InterPro" id="IPR013126">
    <property type="entry name" value="Hsp_70_fam"/>
</dbReference>
<dbReference type="NCBIfam" id="NF001413">
    <property type="entry name" value="PRK00290.1"/>
    <property type="match status" value="1"/>
</dbReference>
<dbReference type="NCBIfam" id="TIGR02350">
    <property type="entry name" value="prok_dnaK"/>
    <property type="match status" value="1"/>
</dbReference>
<dbReference type="PANTHER" id="PTHR19375">
    <property type="entry name" value="HEAT SHOCK PROTEIN 70KDA"/>
    <property type="match status" value="1"/>
</dbReference>
<dbReference type="Pfam" id="PF00012">
    <property type="entry name" value="HSP70"/>
    <property type="match status" value="1"/>
</dbReference>
<dbReference type="PRINTS" id="PR00301">
    <property type="entry name" value="HEATSHOCK70"/>
</dbReference>
<dbReference type="SUPFAM" id="SSF53067">
    <property type="entry name" value="Actin-like ATPase domain"/>
    <property type="match status" value="2"/>
</dbReference>
<dbReference type="SUPFAM" id="SSF100934">
    <property type="entry name" value="Heat shock protein 70kD (HSP70), C-terminal subdomain"/>
    <property type="match status" value="1"/>
</dbReference>
<dbReference type="SUPFAM" id="SSF100920">
    <property type="entry name" value="Heat shock protein 70kD (HSP70), peptide-binding domain"/>
    <property type="match status" value="1"/>
</dbReference>
<dbReference type="PROSITE" id="PS00297">
    <property type="entry name" value="HSP70_1"/>
    <property type="match status" value="1"/>
</dbReference>
<dbReference type="PROSITE" id="PS00329">
    <property type="entry name" value="HSP70_2"/>
    <property type="match status" value="1"/>
</dbReference>
<dbReference type="PROSITE" id="PS01036">
    <property type="entry name" value="HSP70_3"/>
    <property type="match status" value="1"/>
</dbReference>
<organism>
    <name type="scientific">Pseudomonas syringae pv. tomato (strain ATCC BAA-871 / DC3000)</name>
    <dbReference type="NCBI Taxonomy" id="223283"/>
    <lineage>
        <taxon>Bacteria</taxon>
        <taxon>Pseudomonadati</taxon>
        <taxon>Pseudomonadota</taxon>
        <taxon>Gammaproteobacteria</taxon>
        <taxon>Pseudomonadales</taxon>
        <taxon>Pseudomonadaceae</taxon>
        <taxon>Pseudomonas</taxon>
    </lineage>
</organism>
<name>DNAK_PSESM</name>
<reference key="1">
    <citation type="journal article" date="2003" name="Proc. Natl. Acad. Sci. U.S.A.">
        <title>The complete genome sequence of the Arabidopsis and tomato pathogen Pseudomonas syringae pv. tomato DC3000.</title>
        <authorList>
            <person name="Buell C.R."/>
            <person name="Joardar V."/>
            <person name="Lindeberg M."/>
            <person name="Selengut J."/>
            <person name="Paulsen I.T."/>
            <person name="Gwinn M.L."/>
            <person name="Dodson R.J."/>
            <person name="DeBoy R.T."/>
            <person name="Durkin A.S."/>
            <person name="Kolonay J.F."/>
            <person name="Madupu R."/>
            <person name="Daugherty S.C."/>
            <person name="Brinkac L.M."/>
            <person name="Beanan M.J."/>
            <person name="Haft D.H."/>
            <person name="Nelson W.C."/>
            <person name="Davidsen T.M."/>
            <person name="Zafar N."/>
            <person name="Zhou L."/>
            <person name="Liu J."/>
            <person name="Yuan Q."/>
            <person name="Khouri H.M."/>
            <person name="Fedorova N.B."/>
            <person name="Tran B."/>
            <person name="Russell D."/>
            <person name="Berry K.J."/>
            <person name="Utterback T.R."/>
            <person name="Van Aken S.E."/>
            <person name="Feldblyum T.V."/>
            <person name="D'Ascenzo M."/>
            <person name="Deng W.-L."/>
            <person name="Ramos A.R."/>
            <person name="Alfano J.R."/>
            <person name="Cartinhour S."/>
            <person name="Chatterjee A.K."/>
            <person name="Delaney T.P."/>
            <person name="Lazarowitz S.G."/>
            <person name="Martin G.B."/>
            <person name="Schneider D.J."/>
            <person name="Tang X."/>
            <person name="Bender C.L."/>
            <person name="White O."/>
            <person name="Fraser C.M."/>
            <person name="Collmer A."/>
        </authorList>
    </citation>
    <scope>NUCLEOTIDE SEQUENCE [LARGE SCALE GENOMIC DNA]</scope>
    <source>
        <strain>ATCC BAA-871 / DC3000</strain>
    </source>
</reference>
<comment type="function">
    <text evidence="1">Acts as a chaperone.</text>
</comment>
<comment type="induction">
    <text evidence="1">By stress conditions e.g. heat shock.</text>
</comment>
<comment type="similarity">
    <text evidence="1">Belongs to the heat shock protein 70 family.</text>
</comment>
<protein>
    <recommendedName>
        <fullName evidence="1">Chaperone protein DnaK</fullName>
    </recommendedName>
    <alternativeName>
        <fullName evidence="1">HSP70</fullName>
    </alternativeName>
    <alternativeName>
        <fullName evidence="1">Heat shock 70 kDa protein</fullName>
    </alternativeName>
    <alternativeName>
        <fullName evidence="1">Heat shock protein 70</fullName>
    </alternativeName>
</protein>
<feature type="chain" id="PRO_0000078521" description="Chaperone protein DnaK">
    <location>
        <begin position="1"/>
        <end position="638"/>
    </location>
</feature>
<feature type="region of interest" description="Disordered" evidence="2">
    <location>
        <begin position="605"/>
        <end position="625"/>
    </location>
</feature>
<feature type="compositionally biased region" description="Low complexity" evidence="2">
    <location>
        <begin position="605"/>
        <end position="615"/>
    </location>
</feature>
<feature type="compositionally biased region" description="Basic and acidic residues" evidence="2">
    <location>
        <begin position="616"/>
        <end position="625"/>
    </location>
</feature>
<feature type="modified residue" description="Phosphothreonine; by autocatalysis" evidence="1">
    <location>
        <position position="199"/>
    </location>
</feature>
<evidence type="ECO:0000255" key="1">
    <source>
        <dbReference type="HAMAP-Rule" id="MF_00332"/>
    </source>
</evidence>
<evidence type="ECO:0000256" key="2">
    <source>
        <dbReference type="SAM" id="MobiDB-lite"/>
    </source>
</evidence>
<sequence>MGRIIGIDLGTTNSCVSILENGNVKVIDNAEGTRTTPSIIAYANDGEILVGQSAKRQAVTNPHNTLYAVKRLIGRKFDEQVVQKDIQMVPYKIVKADNGDAWVEVNGQKMAPPQISAEILKKMKKTAEDYLGEAVTEAVITVPAYFNDSQRQATKDAGRIAGLDVKRIINEPTAAALAYGMDKAKGDHTVIVYDLGGGTFDVSVIEIAEVDGEHQFEVLATNGDTFLGGEDFDIRLIDYFVDEFKKESGMSLKGDPLAMQRLKEAAEKAKIELSSSTQTEVNLPYITADATGPKHLVVKISRSKLESLVEDLVQRTIEPCRIALKDAGIDIGKINDVILVGGQTRMPLVQKLVTEFFGKEARKDVNPDEAVAMGAAIQGAVLAGDVKDVLLLDVSPLTLGIETMGGVMTALIEKNTTIPTKKSQVFSTADDNQNAVTIHVLQGERKQAGQNKSLGKFDLAEIPPAPRGVPQIEVTFDIDANGILHVGAKDKATGKQQSIVIKANSGLSEEEIQQMVRDAEVNSEEDRKFEELASARNQGDALVHSTRKMIADAGDKVTAEEKTAVEAALVALEAAIKGDDKAVIEAKVEELSKVSAPIAQKMYAEQAENPEAAAKPAEETAKADDVVDAEFEEVKDHK</sequence>
<gene>
    <name evidence="1" type="primary">dnaK</name>
    <name type="ordered locus">PSPTO_4505</name>
</gene>